<proteinExistence type="inferred from homology"/>
<comment type="catalytic activity">
    <reaction evidence="1">
        <text>uridine + ATP = UMP + ADP + H(+)</text>
        <dbReference type="Rhea" id="RHEA:16825"/>
        <dbReference type="ChEBI" id="CHEBI:15378"/>
        <dbReference type="ChEBI" id="CHEBI:16704"/>
        <dbReference type="ChEBI" id="CHEBI:30616"/>
        <dbReference type="ChEBI" id="CHEBI:57865"/>
        <dbReference type="ChEBI" id="CHEBI:456216"/>
        <dbReference type="EC" id="2.7.1.48"/>
    </reaction>
</comment>
<comment type="catalytic activity">
    <reaction evidence="1">
        <text>cytidine + ATP = CMP + ADP + H(+)</text>
        <dbReference type="Rhea" id="RHEA:24674"/>
        <dbReference type="ChEBI" id="CHEBI:15378"/>
        <dbReference type="ChEBI" id="CHEBI:17562"/>
        <dbReference type="ChEBI" id="CHEBI:30616"/>
        <dbReference type="ChEBI" id="CHEBI:60377"/>
        <dbReference type="ChEBI" id="CHEBI:456216"/>
        <dbReference type="EC" id="2.7.1.48"/>
    </reaction>
</comment>
<comment type="pathway">
    <text evidence="1">Pyrimidine metabolism; CTP biosynthesis via salvage pathway; CTP from cytidine: step 1/3.</text>
</comment>
<comment type="pathway">
    <text evidence="1">Pyrimidine metabolism; UMP biosynthesis via salvage pathway; UMP from uridine: step 1/1.</text>
</comment>
<comment type="subcellular location">
    <subcellularLocation>
        <location evidence="1">Cytoplasm</location>
    </subcellularLocation>
</comment>
<comment type="similarity">
    <text evidence="1">Belongs to the uridine kinase family.</text>
</comment>
<accession>C3L5Y6</accession>
<dbReference type="EC" id="2.7.1.48" evidence="1"/>
<dbReference type="EMBL" id="CP001215">
    <property type="protein sequence ID" value="ACP14230.1"/>
    <property type="molecule type" value="Genomic_DNA"/>
</dbReference>
<dbReference type="RefSeq" id="WP_000537086.1">
    <property type="nucleotide sequence ID" value="NC_012581.1"/>
</dbReference>
<dbReference type="SMR" id="C3L5Y6"/>
<dbReference type="GeneID" id="45024253"/>
<dbReference type="KEGG" id="bah:BAMEG_4645"/>
<dbReference type="HOGENOM" id="CLU_021278_1_2_9"/>
<dbReference type="UniPathway" id="UPA00574">
    <property type="reaction ID" value="UER00637"/>
</dbReference>
<dbReference type="UniPathway" id="UPA00579">
    <property type="reaction ID" value="UER00640"/>
</dbReference>
<dbReference type="GO" id="GO:0005737">
    <property type="term" value="C:cytoplasm"/>
    <property type="evidence" value="ECO:0007669"/>
    <property type="project" value="UniProtKB-SubCell"/>
</dbReference>
<dbReference type="GO" id="GO:0005524">
    <property type="term" value="F:ATP binding"/>
    <property type="evidence" value="ECO:0007669"/>
    <property type="project" value="UniProtKB-UniRule"/>
</dbReference>
<dbReference type="GO" id="GO:0043771">
    <property type="term" value="F:cytidine kinase activity"/>
    <property type="evidence" value="ECO:0007669"/>
    <property type="project" value="RHEA"/>
</dbReference>
<dbReference type="GO" id="GO:0004849">
    <property type="term" value="F:uridine kinase activity"/>
    <property type="evidence" value="ECO:0007669"/>
    <property type="project" value="UniProtKB-UniRule"/>
</dbReference>
<dbReference type="GO" id="GO:0044211">
    <property type="term" value="P:CTP salvage"/>
    <property type="evidence" value="ECO:0007669"/>
    <property type="project" value="UniProtKB-UniRule"/>
</dbReference>
<dbReference type="GO" id="GO:0044206">
    <property type="term" value="P:UMP salvage"/>
    <property type="evidence" value="ECO:0007669"/>
    <property type="project" value="UniProtKB-UniRule"/>
</dbReference>
<dbReference type="CDD" id="cd02023">
    <property type="entry name" value="UMPK"/>
    <property type="match status" value="1"/>
</dbReference>
<dbReference type="Gene3D" id="3.40.50.300">
    <property type="entry name" value="P-loop containing nucleotide triphosphate hydrolases"/>
    <property type="match status" value="1"/>
</dbReference>
<dbReference type="HAMAP" id="MF_00551">
    <property type="entry name" value="Uridine_kinase"/>
    <property type="match status" value="1"/>
</dbReference>
<dbReference type="InterPro" id="IPR027417">
    <property type="entry name" value="P-loop_NTPase"/>
</dbReference>
<dbReference type="InterPro" id="IPR006083">
    <property type="entry name" value="PRK/URK"/>
</dbReference>
<dbReference type="InterPro" id="IPR026008">
    <property type="entry name" value="Uridine_kinase"/>
</dbReference>
<dbReference type="InterPro" id="IPR000764">
    <property type="entry name" value="Uridine_kinase-like"/>
</dbReference>
<dbReference type="NCBIfam" id="NF004018">
    <property type="entry name" value="PRK05480.1"/>
    <property type="match status" value="1"/>
</dbReference>
<dbReference type="NCBIfam" id="TIGR00235">
    <property type="entry name" value="udk"/>
    <property type="match status" value="1"/>
</dbReference>
<dbReference type="PANTHER" id="PTHR10285">
    <property type="entry name" value="URIDINE KINASE"/>
    <property type="match status" value="1"/>
</dbReference>
<dbReference type="Pfam" id="PF00485">
    <property type="entry name" value="PRK"/>
    <property type="match status" value="1"/>
</dbReference>
<dbReference type="PRINTS" id="PR00988">
    <property type="entry name" value="URIDINKINASE"/>
</dbReference>
<dbReference type="SUPFAM" id="SSF52540">
    <property type="entry name" value="P-loop containing nucleoside triphosphate hydrolases"/>
    <property type="match status" value="1"/>
</dbReference>
<protein>
    <recommendedName>
        <fullName evidence="1">Uridine kinase</fullName>
        <ecNumber evidence="1">2.7.1.48</ecNumber>
    </recommendedName>
    <alternativeName>
        <fullName evidence="1">Cytidine monophosphokinase</fullName>
    </alternativeName>
    <alternativeName>
        <fullName evidence="1">Uridine monophosphokinase</fullName>
    </alternativeName>
</protein>
<evidence type="ECO:0000255" key="1">
    <source>
        <dbReference type="HAMAP-Rule" id="MF_00551"/>
    </source>
</evidence>
<sequence>MGTNKPVVIGIAGGSGSGKTSVTKAIFDHFKGHSILILEQDYYYKDQSHLPMEERLKTNYDHPLAFDNDLLIEHLQQLLAYKQVDKPVYDYTLHTRSEEIIPVEPKDVIILEGILILEDPRLCELMDIKLFVDTDADLRILRRMQRDIKERGRTMDSVIDQYVNVVRPMHNQFIEPSKKFADIIIPEGGQNHVAIDSMVTKIATILEQKVNL</sequence>
<gene>
    <name evidence="1" type="primary">udk</name>
    <name type="ordered locus">BAMEG_4645</name>
</gene>
<keyword id="KW-0067">ATP-binding</keyword>
<keyword id="KW-0963">Cytoplasm</keyword>
<keyword id="KW-0418">Kinase</keyword>
<keyword id="KW-0547">Nucleotide-binding</keyword>
<keyword id="KW-0808">Transferase</keyword>
<organism>
    <name type="scientific">Bacillus anthracis (strain CDC 684 / NRRL 3495)</name>
    <dbReference type="NCBI Taxonomy" id="568206"/>
    <lineage>
        <taxon>Bacteria</taxon>
        <taxon>Bacillati</taxon>
        <taxon>Bacillota</taxon>
        <taxon>Bacilli</taxon>
        <taxon>Bacillales</taxon>
        <taxon>Bacillaceae</taxon>
        <taxon>Bacillus</taxon>
        <taxon>Bacillus cereus group</taxon>
    </lineage>
</organism>
<name>URK_BACAC</name>
<feature type="chain" id="PRO_1000200504" description="Uridine kinase">
    <location>
        <begin position="1"/>
        <end position="212"/>
    </location>
</feature>
<feature type="binding site" evidence="1">
    <location>
        <begin position="13"/>
        <end position="20"/>
    </location>
    <ligand>
        <name>ATP</name>
        <dbReference type="ChEBI" id="CHEBI:30616"/>
    </ligand>
</feature>
<reference key="1">
    <citation type="submission" date="2008-10" db="EMBL/GenBank/DDBJ databases">
        <title>Genome sequence of Bacillus anthracis str. CDC 684.</title>
        <authorList>
            <person name="Dodson R.J."/>
            <person name="Munk A.C."/>
            <person name="Brettin T."/>
            <person name="Bruce D."/>
            <person name="Detter C."/>
            <person name="Tapia R."/>
            <person name="Han C."/>
            <person name="Sutton G."/>
            <person name="Sims D."/>
        </authorList>
    </citation>
    <scope>NUCLEOTIDE SEQUENCE [LARGE SCALE GENOMIC DNA]</scope>
    <source>
        <strain>CDC 684 / NRRL 3495</strain>
    </source>
</reference>